<proteinExistence type="evidence at protein level"/>
<reference key="1">
    <citation type="journal article" date="2010" name="J. Struct. Biol.">
        <title>Structures of two elapid snake venom metalloproteases with distinct activities highlight the disulfide patterns in the D domain of ADAMalysin family proteins.</title>
        <authorList>
            <person name="Guan H.-H."/>
            <person name="Goh K.S."/>
            <person name="Davamani F."/>
            <person name="Wu P.-L."/>
            <person name="Huang Y.W."/>
            <person name="Jeyakanthan J."/>
            <person name="Wu W.-G."/>
            <person name="Chen C.-J."/>
        </authorList>
    </citation>
    <scope>NUCLEOTIDE SEQUENCE [MRNA]</scope>
    <scope>PARTIAL PROTEIN SEQUENCE</scope>
    <scope>FUNCTION</scope>
    <scope>SUBUNIT</scope>
    <scope>X-RAY CRYSTALLOGRAPHY (2.30 ANGSTROMS) OF 197-593 IN COMPLEX WITH ZINC ION AND CALCIUM IONS</scope>
    <scope>GLYCOSYLATION AT ASN-319 AND ASN-490</scope>
    <scope>DISULFIDE BONDS</scope>
    <source>
        <strain>Taiwan</strain>
        <tissue>Venom</tissue>
        <tissue>Venom gland</tissue>
    </source>
</reference>
<organism>
    <name type="scientific">Naja atra</name>
    <name type="common">Chinese cobra</name>
    <dbReference type="NCBI Taxonomy" id="8656"/>
    <lineage>
        <taxon>Eukaryota</taxon>
        <taxon>Metazoa</taxon>
        <taxon>Chordata</taxon>
        <taxon>Craniata</taxon>
        <taxon>Vertebrata</taxon>
        <taxon>Euteleostomi</taxon>
        <taxon>Lepidosauria</taxon>
        <taxon>Squamata</taxon>
        <taxon>Bifurcata</taxon>
        <taxon>Unidentata</taxon>
        <taxon>Episquamata</taxon>
        <taxon>Toxicofera</taxon>
        <taxon>Serpentes</taxon>
        <taxon>Colubroidea</taxon>
        <taxon>Elapidae</taxon>
        <taxon>Elapinae</taxon>
        <taxon>Naja</taxon>
    </lineage>
</organism>
<name>VM3KL_NAJAT</name>
<accession>D3TTC1</accession>
<accession>D4AEP6</accession>
<feature type="signal peptide" evidence="2">
    <location>
        <begin position="1"/>
        <end position="20"/>
    </location>
</feature>
<feature type="propeptide" id="PRO_5000578131">
    <location>
        <begin position="21"/>
        <end position="196"/>
    </location>
</feature>
<feature type="chain" id="PRO_5000578132" description="Zinc metalloproteinase-disintegrin-like kaouthiagin-like">
    <location>
        <begin position="197"/>
        <end position="593"/>
    </location>
</feature>
<feature type="domain" description="Peptidase M12B" evidence="4">
    <location>
        <begin position="205"/>
        <end position="400"/>
    </location>
</feature>
<feature type="domain" description="Disintegrin" evidence="3">
    <location>
        <begin position="408"/>
        <end position="477"/>
    </location>
</feature>
<feature type="short sequence motif" description="D/ECD-tripeptide">
    <location>
        <begin position="455"/>
        <end position="457"/>
    </location>
</feature>
<feature type="binding site">
    <location>
        <position position="208"/>
    </location>
    <ligand>
        <name>Ca(2+)</name>
        <dbReference type="ChEBI" id="CHEBI:29108"/>
        <label>1</label>
    </ligand>
</feature>
<feature type="binding site">
    <location>
        <position position="292"/>
    </location>
    <ligand>
        <name>Ca(2+)</name>
        <dbReference type="ChEBI" id="CHEBI:29108"/>
        <label>1</label>
    </ligand>
</feature>
<feature type="binding site">
    <location>
        <position position="341"/>
    </location>
    <ligand>
        <name>Zn(2+)</name>
        <dbReference type="ChEBI" id="CHEBI:29105"/>
        <note>catalytic</note>
    </ligand>
</feature>
<feature type="binding site">
    <location>
        <position position="345"/>
    </location>
    <ligand>
        <name>Zn(2+)</name>
        <dbReference type="ChEBI" id="CHEBI:29105"/>
        <note>catalytic</note>
    </ligand>
</feature>
<feature type="binding site">
    <location>
        <position position="351"/>
    </location>
    <ligand>
        <name>Zn(2+)</name>
        <dbReference type="ChEBI" id="CHEBI:29105"/>
        <note>catalytic</note>
    </ligand>
</feature>
<feature type="binding site">
    <location>
        <position position="395"/>
    </location>
    <ligand>
        <name>Ca(2+)</name>
        <dbReference type="ChEBI" id="CHEBI:29108"/>
        <label>1</label>
    </ligand>
</feature>
<feature type="binding site">
    <location>
        <position position="398"/>
    </location>
    <ligand>
        <name>Ca(2+)</name>
        <dbReference type="ChEBI" id="CHEBI:29108"/>
        <label>1</label>
    </ligand>
</feature>
<feature type="binding site">
    <location>
        <position position="410"/>
    </location>
    <ligand>
        <name>Ca(2+)</name>
        <dbReference type="ChEBI" id="CHEBI:29108"/>
        <label>2</label>
    </ligand>
</feature>
<feature type="binding site">
    <location>
        <position position="413"/>
    </location>
    <ligand>
        <name>Ca(2+)</name>
        <dbReference type="ChEBI" id="CHEBI:29108"/>
        <label>2</label>
    </ligand>
</feature>
<feature type="binding site">
    <location>
        <position position="415"/>
    </location>
    <ligand>
        <name>Ca(2+)</name>
        <dbReference type="ChEBI" id="CHEBI:29108"/>
        <label>2</label>
    </ligand>
</feature>
<feature type="binding site">
    <location>
        <position position="417"/>
    </location>
    <ligand>
        <name>Ca(2+)</name>
        <dbReference type="ChEBI" id="CHEBI:29108"/>
        <label>2</label>
    </ligand>
</feature>
<feature type="binding site">
    <location>
        <position position="420"/>
    </location>
    <ligand>
        <name>Ca(2+)</name>
        <dbReference type="ChEBI" id="CHEBI:29108"/>
        <label>2</label>
    </ligand>
</feature>
<feature type="binding site">
    <location>
        <position position="423"/>
    </location>
    <ligand>
        <name>Ca(2+)</name>
        <dbReference type="ChEBI" id="CHEBI:29108"/>
        <label>2</label>
    </ligand>
</feature>
<feature type="binding site">
    <location>
        <position position="457"/>
    </location>
    <ligand>
        <name>Ca(2+)</name>
        <dbReference type="ChEBI" id="CHEBI:29108"/>
        <label>3</label>
    </ligand>
</feature>
<feature type="binding site">
    <location>
        <position position="458"/>
    </location>
    <ligand>
        <name>Ca(2+)</name>
        <dbReference type="ChEBI" id="CHEBI:29108"/>
        <label>3</label>
    </ligand>
</feature>
<feature type="binding site">
    <location>
        <position position="460"/>
    </location>
    <ligand>
        <name>Ca(2+)</name>
        <dbReference type="ChEBI" id="CHEBI:29108"/>
        <label>3</label>
    </ligand>
</feature>
<feature type="binding site">
    <location>
        <position position="472"/>
    </location>
    <ligand>
        <name>Ca(2+)</name>
        <dbReference type="ChEBI" id="CHEBI:29108"/>
        <label>3</label>
    </ligand>
</feature>
<feature type="binding site">
    <location>
        <position position="473"/>
    </location>
    <ligand>
        <name>Ca(2+)</name>
        <dbReference type="ChEBI" id="CHEBI:29108"/>
        <label>3</label>
    </ligand>
</feature>
<feature type="glycosylation site" description="N-linked (GlcNAc...) asparagine" evidence="5">
    <location>
        <position position="319"/>
    </location>
</feature>
<feature type="glycosylation site" description="N-linked (GlcNAc...) asparagine" evidence="5">
    <location>
        <position position="490"/>
    </location>
</feature>
<feature type="disulfide bond" evidence="5">
    <location>
        <begin position="316"/>
        <end position="395"/>
    </location>
</feature>
<feature type="disulfide bond" evidence="5">
    <location>
        <begin position="356"/>
        <end position="379"/>
    </location>
</feature>
<feature type="disulfide bond" evidence="5">
    <location>
        <begin position="358"/>
        <end position="363"/>
    </location>
</feature>
<feature type="disulfide bond" evidence="5">
    <location>
        <begin position="411"/>
        <end position="440"/>
    </location>
</feature>
<feature type="disulfide bond" evidence="5">
    <location>
        <begin position="422"/>
        <end position="435"/>
    </location>
</feature>
<feature type="disulfide bond" evidence="5">
    <location>
        <begin position="424"/>
        <end position="430"/>
    </location>
</feature>
<feature type="disulfide bond" evidence="5">
    <location>
        <begin position="434"/>
        <end position="462"/>
    </location>
</feature>
<feature type="disulfide bond" evidence="5">
    <location>
        <begin position="449"/>
        <end position="469"/>
    </location>
</feature>
<feature type="disulfide bond" evidence="5">
    <location>
        <begin position="456"/>
        <end position="488"/>
    </location>
</feature>
<feature type="disulfide bond" evidence="5">
    <location>
        <begin position="481"/>
        <end position="493"/>
    </location>
</feature>
<feature type="disulfide bond" evidence="5">
    <location>
        <begin position="500"/>
        <end position="550"/>
    </location>
</feature>
<feature type="disulfide bond" evidence="5">
    <location>
        <begin position="515"/>
        <end position="558"/>
    </location>
</feature>
<feature type="disulfide bond" evidence="5">
    <location>
        <begin position="528"/>
        <end position="538"/>
    </location>
</feature>
<feature type="disulfide bond" evidence="5">
    <location>
        <begin position="545"/>
        <end position="581"/>
    </location>
</feature>
<feature type="disulfide bond" evidence="5">
    <location>
        <begin position="575"/>
        <end position="586"/>
    </location>
</feature>
<feature type="sequence conflict" description="In Ref. 1; AA sequence." evidence="6" ref="1">
    <original>R</original>
    <variation>K</variation>
    <location>
        <position position="231"/>
    </location>
</feature>
<feature type="sequence conflict" description="In Ref. 1; AA sequence." evidence="6" ref="1">
    <original>D</original>
    <variation>N</variation>
    <location>
        <position position="517"/>
    </location>
</feature>
<feature type="strand" evidence="8">
    <location>
        <begin position="205"/>
        <end position="213"/>
    </location>
</feature>
<feature type="helix" evidence="8">
    <location>
        <begin position="215"/>
        <end position="220"/>
    </location>
</feature>
<feature type="turn" evidence="8">
    <location>
        <begin position="221"/>
        <end position="223"/>
    </location>
</feature>
<feature type="helix" evidence="8">
    <location>
        <begin position="225"/>
        <end position="243"/>
    </location>
</feature>
<feature type="helix" evidence="8">
    <location>
        <begin position="244"/>
        <end position="246"/>
    </location>
</feature>
<feature type="strand" evidence="8">
    <location>
        <begin position="248"/>
        <end position="257"/>
    </location>
</feature>
<feature type="helix" evidence="8">
    <location>
        <begin position="270"/>
        <end position="283"/>
    </location>
</feature>
<feature type="turn" evidence="8">
    <location>
        <begin position="284"/>
        <end position="288"/>
    </location>
</feature>
<feature type="strand" evidence="8">
    <location>
        <begin position="292"/>
        <end position="298"/>
    </location>
</feature>
<feature type="strand" evidence="8">
    <location>
        <begin position="308"/>
        <end position="310"/>
    </location>
</feature>
<feature type="turn" evidence="8">
    <location>
        <begin position="318"/>
        <end position="320"/>
    </location>
</feature>
<feature type="strand" evidence="8">
    <location>
        <begin position="322"/>
        <end position="326"/>
    </location>
</feature>
<feature type="helix" evidence="8">
    <location>
        <begin position="332"/>
        <end position="346"/>
    </location>
</feature>
<feature type="strand" evidence="8">
    <location>
        <begin position="359"/>
        <end position="361"/>
    </location>
</feature>
<feature type="helix" evidence="8">
    <location>
        <begin position="378"/>
        <end position="391"/>
    </location>
</feature>
<feature type="helix" evidence="8">
    <location>
        <begin position="394"/>
        <end position="396"/>
    </location>
</feature>
<feature type="helix" evidence="8">
    <location>
        <begin position="402"/>
        <end position="404"/>
    </location>
</feature>
<feature type="strand" evidence="8">
    <location>
        <begin position="413"/>
        <end position="415"/>
    </location>
</feature>
<feature type="turn" evidence="8">
    <location>
        <begin position="427"/>
        <end position="429"/>
    </location>
</feature>
<feature type="turn" evidence="8">
    <location>
        <begin position="437"/>
        <end position="440"/>
    </location>
</feature>
<feature type="strand" evidence="8">
    <location>
        <begin position="448"/>
        <end position="450"/>
    </location>
</feature>
<feature type="turn" evidence="8">
    <location>
        <begin position="482"/>
        <end position="485"/>
    </location>
</feature>
<feature type="helix" evidence="8">
    <location>
        <begin position="496"/>
        <end position="504"/>
    </location>
</feature>
<feature type="strand" evidence="8">
    <location>
        <begin position="508"/>
        <end position="510"/>
    </location>
</feature>
<feature type="helix" evidence="8">
    <location>
        <begin position="513"/>
        <end position="520"/>
    </location>
</feature>
<feature type="strand" evidence="8">
    <location>
        <begin position="523"/>
        <end position="526"/>
    </location>
</feature>
<feature type="helix" evidence="8">
    <location>
        <begin position="543"/>
        <end position="545"/>
    </location>
</feature>
<feature type="strand" evidence="8">
    <location>
        <begin position="550"/>
        <end position="552"/>
    </location>
</feature>
<feature type="strand" evidence="8">
    <location>
        <begin position="574"/>
        <end position="576"/>
    </location>
</feature>
<feature type="strand" evidence="8">
    <location>
        <begin position="579"/>
        <end position="582"/>
    </location>
</feature>
<feature type="strand" evidence="8">
    <location>
        <begin position="585"/>
        <end position="588"/>
    </location>
</feature>
<evidence type="ECO:0000250" key="1"/>
<evidence type="ECO:0000255" key="2"/>
<evidence type="ECO:0000255" key="3">
    <source>
        <dbReference type="PROSITE-ProRule" id="PRU00068"/>
    </source>
</evidence>
<evidence type="ECO:0000255" key="4">
    <source>
        <dbReference type="PROSITE-ProRule" id="PRU00276"/>
    </source>
</evidence>
<evidence type="ECO:0000269" key="5">
    <source>
    </source>
</evidence>
<evidence type="ECO:0000305" key="6"/>
<evidence type="ECO:0000305" key="7">
    <source>
    </source>
</evidence>
<evidence type="ECO:0007829" key="8">
    <source>
        <dbReference type="PDB" id="3K7N"/>
    </source>
</evidence>
<dbReference type="EC" id="3.4.24.-"/>
<dbReference type="EMBL" id="FJ177516">
    <property type="protein sequence ID" value="ACN50005.1"/>
    <property type="molecule type" value="mRNA"/>
</dbReference>
<dbReference type="PDB" id="3K7N">
    <property type="method" value="X-ray"/>
    <property type="resolution" value="2.30 A"/>
    <property type="chains" value="A=197-593"/>
</dbReference>
<dbReference type="PDBsum" id="3K7N"/>
<dbReference type="SMR" id="D3TTC1"/>
<dbReference type="MEROPS" id="M12.236"/>
<dbReference type="iPTMnet" id="D3TTC1"/>
<dbReference type="TopDownProteomics" id="D3TTC1"/>
<dbReference type="EvolutionaryTrace" id="D3TTC1"/>
<dbReference type="GO" id="GO:0005576">
    <property type="term" value="C:extracellular region"/>
    <property type="evidence" value="ECO:0007669"/>
    <property type="project" value="UniProtKB-SubCell"/>
</dbReference>
<dbReference type="GO" id="GO:0005886">
    <property type="term" value="C:plasma membrane"/>
    <property type="evidence" value="ECO:0007669"/>
    <property type="project" value="TreeGrafter"/>
</dbReference>
<dbReference type="GO" id="GO:0046872">
    <property type="term" value="F:metal ion binding"/>
    <property type="evidence" value="ECO:0007669"/>
    <property type="project" value="UniProtKB-KW"/>
</dbReference>
<dbReference type="GO" id="GO:0004222">
    <property type="term" value="F:metalloendopeptidase activity"/>
    <property type="evidence" value="ECO:0007669"/>
    <property type="project" value="InterPro"/>
</dbReference>
<dbReference type="GO" id="GO:0090729">
    <property type="term" value="F:toxin activity"/>
    <property type="evidence" value="ECO:0007669"/>
    <property type="project" value="UniProtKB-KW"/>
</dbReference>
<dbReference type="GO" id="GO:0006508">
    <property type="term" value="P:proteolysis"/>
    <property type="evidence" value="ECO:0007669"/>
    <property type="project" value="UniProtKB-KW"/>
</dbReference>
<dbReference type="CDD" id="cd04269">
    <property type="entry name" value="ZnMc_adamalysin_II_like"/>
    <property type="match status" value="1"/>
</dbReference>
<dbReference type="FunFam" id="3.40.390.10:FF:000002">
    <property type="entry name" value="Disintegrin and metalloproteinase domain-containing protein 22"/>
    <property type="match status" value="1"/>
</dbReference>
<dbReference type="Gene3D" id="3.40.1620.60">
    <property type="match status" value="1"/>
</dbReference>
<dbReference type="Gene3D" id="3.40.390.10">
    <property type="entry name" value="Collagenase (Catalytic Domain)"/>
    <property type="match status" value="1"/>
</dbReference>
<dbReference type="Gene3D" id="4.10.70.10">
    <property type="entry name" value="Disintegrin domain"/>
    <property type="match status" value="2"/>
</dbReference>
<dbReference type="InterPro" id="IPR006586">
    <property type="entry name" value="ADAM_Cys-rich"/>
</dbReference>
<dbReference type="InterPro" id="IPR001762">
    <property type="entry name" value="Disintegrin_dom"/>
</dbReference>
<dbReference type="InterPro" id="IPR036436">
    <property type="entry name" value="Disintegrin_dom_sf"/>
</dbReference>
<dbReference type="InterPro" id="IPR024079">
    <property type="entry name" value="MetalloPept_cat_dom_sf"/>
</dbReference>
<dbReference type="InterPro" id="IPR001590">
    <property type="entry name" value="Peptidase_M12B"/>
</dbReference>
<dbReference type="InterPro" id="IPR002870">
    <property type="entry name" value="Peptidase_M12B_N"/>
</dbReference>
<dbReference type="InterPro" id="IPR034027">
    <property type="entry name" value="Reprolysin_adamalysin"/>
</dbReference>
<dbReference type="PANTHER" id="PTHR11905">
    <property type="entry name" value="ADAM A DISINTEGRIN AND METALLOPROTEASE DOMAIN"/>
    <property type="match status" value="1"/>
</dbReference>
<dbReference type="PANTHER" id="PTHR11905:SF32">
    <property type="entry name" value="DISINTEGRIN AND METALLOPROTEINASE DOMAIN-CONTAINING PROTEIN 28"/>
    <property type="match status" value="1"/>
</dbReference>
<dbReference type="Pfam" id="PF08516">
    <property type="entry name" value="ADAM_CR"/>
    <property type="match status" value="1"/>
</dbReference>
<dbReference type="Pfam" id="PF01562">
    <property type="entry name" value="Pep_M12B_propep"/>
    <property type="match status" value="1"/>
</dbReference>
<dbReference type="Pfam" id="PF01421">
    <property type="entry name" value="Reprolysin"/>
    <property type="match status" value="1"/>
</dbReference>
<dbReference type="SMART" id="SM00608">
    <property type="entry name" value="ACR"/>
    <property type="match status" value="1"/>
</dbReference>
<dbReference type="SMART" id="SM00050">
    <property type="entry name" value="DISIN"/>
    <property type="match status" value="1"/>
</dbReference>
<dbReference type="SUPFAM" id="SSF57552">
    <property type="entry name" value="Blood coagulation inhibitor (disintegrin)"/>
    <property type="match status" value="1"/>
</dbReference>
<dbReference type="SUPFAM" id="SSF55486">
    <property type="entry name" value="Metalloproteases ('zincins'), catalytic domain"/>
    <property type="match status" value="1"/>
</dbReference>
<dbReference type="PROSITE" id="PS50215">
    <property type="entry name" value="ADAM_MEPRO"/>
    <property type="match status" value="1"/>
</dbReference>
<dbReference type="PROSITE" id="PS50214">
    <property type="entry name" value="DISINTEGRIN_2"/>
    <property type="match status" value="1"/>
</dbReference>
<dbReference type="PROSITE" id="PS00142">
    <property type="entry name" value="ZINC_PROTEASE"/>
    <property type="match status" value="1"/>
</dbReference>
<sequence>MIQALLVIICLAVFPHQGSSIILESGNVNDYEVVYPQKVPALLKGGVQNPQPETKYEDTMRYEFQVNGEPVVLHLERNKGLFSEDYTETHYAPDGREITTSPPVQDHCYYHGYIQNEADSSAVISACDGLKGHFEHQGETYFIEPLKISNSEAHAIYKDENVENEDETPEICGVTETTWESDESIEKTSQFTNTPEQDRYLQDKKYIEFYVIVDNRMYRYYNNDKPAIKIRVYEMINAVNTKFRPLKIHIALIGLEIWSNKDKFEVKPAASVTLKSFGEWRETVLLPRKRNDNAQLLTGIDFNGNTVGRAYIGSLCKTNESVAIVQDYNRRISLVASTITHELGHNLGIHHDKASCICIPGPCIMLKKRTAPAFQFSSCSIREYREYLLRDRPQCILNKPLSTDIVSPPICGNYFVEVGEECDCGSPQACQSACCNAATCQFKGAETECRVAKDDCDLPELCTGQSAECPTDSLQRNGHPCQNNQSYCYNGTCPTLTNQCITLLGPHFTVSPKGCFDLNMRGDDGSFCRMEDGTKIPCAAKDVKCGRLYCTEKNTMSCLIPPNPDGIMAEPGTKCGDGMVCSKGQCVDVQTAY</sequence>
<keyword id="KW-0002">3D-structure</keyword>
<keyword id="KW-0106">Calcium</keyword>
<keyword id="KW-0903">Direct protein sequencing</keyword>
<keyword id="KW-1015">Disulfide bond</keyword>
<keyword id="KW-0325">Glycoprotein</keyword>
<keyword id="KW-0378">Hydrolase</keyword>
<keyword id="KW-0479">Metal-binding</keyword>
<keyword id="KW-0482">Metalloprotease</keyword>
<keyword id="KW-0645">Protease</keyword>
<keyword id="KW-0964">Secreted</keyword>
<keyword id="KW-0732">Signal</keyword>
<keyword id="KW-0800">Toxin</keyword>
<keyword id="KW-0862">Zinc</keyword>
<keyword id="KW-0865">Zymogen</keyword>
<comment type="function">
    <text evidence="5">Snake venom zinc metalloproteinase that cleaves the membrane-bound precursor of TNF-alpha (TNF) into its mature soluble form showing the same digestion pattern than ADAM17.</text>
</comment>
<comment type="cofactor">
    <cofactor evidence="1">
        <name>Zn(2+)</name>
        <dbReference type="ChEBI" id="CHEBI:29105"/>
    </cofactor>
    <text evidence="1">Binds 1 zinc ion per subunit.</text>
</comment>
<comment type="subunit">
    <text evidence="5">Monomer.</text>
</comment>
<comment type="subcellular location">
    <subcellularLocation>
        <location>Secreted</location>
    </subcellularLocation>
</comment>
<comment type="tissue specificity">
    <text>Expressed by the venom gland.</text>
</comment>
<comment type="miscellaneous">
    <text evidence="7">Negative results: does not show autolytic activity, as encountered in viperid venoms. Does not inhibit cell migration (PubMed:19932752).</text>
</comment>
<comment type="similarity">
    <text evidence="6">Belongs to the venom metalloproteinase (M12B) family. P-III subfamily. P-IIIa sub-subfamily.</text>
</comment>
<comment type="caution">
    <text evidence="6">The protein is 98% identical to atrase B (AC D6PXE8), a metalloproteinase secreted by a Chinese cobra from the Hunan Province of China. Surprisingly, mature proteins released from the two similar precursors are not the same size.</text>
</comment>
<protein>
    <recommendedName>
        <fullName>Zinc metalloproteinase-disintegrin-like kaouthiagin-like</fullName>
        <shortName>K-like</shortName>
        <ecNumber>3.4.24.-</ecNumber>
    </recommendedName>
    <alternativeName>
        <fullName>Snake venom metalloproteinase</fullName>
        <shortName>SVMP</shortName>
    </alternativeName>
</protein>